<protein>
    <recommendedName>
        <fullName>Hemin receptor</fullName>
    </recommendedName>
</protein>
<dbReference type="EMBL" id="U60647">
    <property type="protein sequence ID" value="AAC64866.1"/>
    <property type="molecule type" value="Genomic_DNA"/>
</dbReference>
<dbReference type="EMBL" id="AL590842">
    <property type="protein sequence ID" value="CAL18969.1"/>
    <property type="molecule type" value="Genomic_DNA"/>
</dbReference>
<dbReference type="EMBL" id="AE009952">
    <property type="protein sequence ID" value="AAM84131.1"/>
    <property type="molecule type" value="Genomic_DNA"/>
</dbReference>
<dbReference type="EMBL" id="AE017042">
    <property type="protein sequence ID" value="AAS60709.1"/>
    <property type="molecule type" value="Genomic_DNA"/>
</dbReference>
<dbReference type="PIR" id="AG0035">
    <property type="entry name" value="AG0035"/>
</dbReference>
<dbReference type="PIR" id="T12069">
    <property type="entry name" value="T12069"/>
</dbReference>
<dbReference type="RefSeq" id="WP_002209062.1">
    <property type="nucleotide sequence ID" value="NZ_WUCM01000046.1"/>
</dbReference>
<dbReference type="RefSeq" id="YP_002345365.1">
    <property type="nucleotide sequence ID" value="NC_003143.1"/>
</dbReference>
<dbReference type="SMR" id="Q56989"/>
<dbReference type="IntAct" id="Q56989">
    <property type="interactions" value="2"/>
</dbReference>
<dbReference type="STRING" id="214092.YPO0283"/>
<dbReference type="PaxDb" id="214092-YPO0283"/>
<dbReference type="DNASU" id="1145490"/>
<dbReference type="EnsemblBacteria" id="AAS60709">
    <property type="protein sequence ID" value="AAS60709"/>
    <property type="gene ID" value="YP_0438"/>
</dbReference>
<dbReference type="KEGG" id="ype:YPO0283"/>
<dbReference type="KEGG" id="ypk:y0543"/>
<dbReference type="KEGG" id="ypm:YP_0438"/>
<dbReference type="PATRIC" id="fig|214092.21.peg.516"/>
<dbReference type="eggNOG" id="COG4771">
    <property type="taxonomic scope" value="Bacteria"/>
</dbReference>
<dbReference type="HOGENOM" id="CLU_008287_19_3_6"/>
<dbReference type="OMA" id="TNAKDYI"/>
<dbReference type="OrthoDB" id="6046653at2"/>
<dbReference type="Proteomes" id="UP000000815">
    <property type="component" value="Chromosome"/>
</dbReference>
<dbReference type="Proteomes" id="UP000001019">
    <property type="component" value="Chromosome"/>
</dbReference>
<dbReference type="Proteomes" id="UP000002490">
    <property type="component" value="Chromosome"/>
</dbReference>
<dbReference type="GO" id="GO:0009279">
    <property type="term" value="C:cell outer membrane"/>
    <property type="evidence" value="ECO:0000318"/>
    <property type="project" value="GO_Central"/>
</dbReference>
<dbReference type="GO" id="GO:0015232">
    <property type="term" value="F:heme transmembrane transporter activity"/>
    <property type="evidence" value="ECO:0007669"/>
    <property type="project" value="InterPro"/>
</dbReference>
<dbReference type="GO" id="GO:0015344">
    <property type="term" value="F:siderophore uptake transmembrane transporter activity"/>
    <property type="evidence" value="ECO:0000318"/>
    <property type="project" value="GO_Central"/>
</dbReference>
<dbReference type="GO" id="GO:0071281">
    <property type="term" value="P:cellular response to iron ion"/>
    <property type="evidence" value="ECO:0000269"/>
    <property type="project" value="CollecTF"/>
</dbReference>
<dbReference type="GO" id="GO:0044718">
    <property type="term" value="P:siderophore transmembrane transport"/>
    <property type="evidence" value="ECO:0000318"/>
    <property type="project" value="GO_Central"/>
</dbReference>
<dbReference type="CDD" id="cd01347">
    <property type="entry name" value="ligand_gated_channel"/>
    <property type="match status" value="1"/>
</dbReference>
<dbReference type="Gene3D" id="2.40.170.20">
    <property type="entry name" value="TonB-dependent receptor, beta-barrel domain"/>
    <property type="match status" value="1"/>
</dbReference>
<dbReference type="Gene3D" id="2.170.130.10">
    <property type="entry name" value="TonB-dependent receptor, plug domain"/>
    <property type="match status" value="1"/>
</dbReference>
<dbReference type="InterPro" id="IPR012910">
    <property type="entry name" value="Plug_dom"/>
</dbReference>
<dbReference type="InterPro" id="IPR037066">
    <property type="entry name" value="Plug_dom_sf"/>
</dbReference>
<dbReference type="InterPro" id="IPR039426">
    <property type="entry name" value="TonB-dep_rcpt-like"/>
</dbReference>
<dbReference type="InterPro" id="IPR000531">
    <property type="entry name" value="TonB-dep_rcpt_b-brl"/>
</dbReference>
<dbReference type="InterPro" id="IPR010916">
    <property type="entry name" value="TonB_box_CS"/>
</dbReference>
<dbReference type="InterPro" id="IPR011276">
    <property type="entry name" value="TonB_haem/Hb_rcpt"/>
</dbReference>
<dbReference type="InterPro" id="IPR010949">
    <property type="entry name" value="TonB_Hb/transfer/lactofer_rcpt"/>
</dbReference>
<dbReference type="InterPro" id="IPR036942">
    <property type="entry name" value="TonB_rcpt_b-brl_sf"/>
</dbReference>
<dbReference type="NCBIfam" id="TIGR01785">
    <property type="entry name" value="TonB-hemin"/>
    <property type="match status" value="1"/>
</dbReference>
<dbReference type="NCBIfam" id="TIGR01786">
    <property type="entry name" value="TonB-hemlactrns"/>
    <property type="match status" value="1"/>
</dbReference>
<dbReference type="PANTHER" id="PTHR30069:SF41">
    <property type="entry name" value="HEME_HEMOPEXIN UTILIZATION PROTEIN C"/>
    <property type="match status" value="1"/>
</dbReference>
<dbReference type="PANTHER" id="PTHR30069">
    <property type="entry name" value="TONB-DEPENDENT OUTER MEMBRANE RECEPTOR"/>
    <property type="match status" value="1"/>
</dbReference>
<dbReference type="Pfam" id="PF07715">
    <property type="entry name" value="Plug"/>
    <property type="match status" value="1"/>
</dbReference>
<dbReference type="Pfam" id="PF00593">
    <property type="entry name" value="TonB_dep_Rec_b-barrel"/>
    <property type="match status" value="1"/>
</dbReference>
<dbReference type="SUPFAM" id="SSF56935">
    <property type="entry name" value="Porins"/>
    <property type="match status" value="1"/>
</dbReference>
<dbReference type="PROSITE" id="PS00430">
    <property type="entry name" value="TONB_DEPENDENT_REC_1"/>
    <property type="match status" value="1"/>
</dbReference>
<dbReference type="PROSITE" id="PS52016">
    <property type="entry name" value="TONB_DEPENDENT_REC_3"/>
    <property type="match status" value="1"/>
</dbReference>
<name>HMUR_YERPE</name>
<accession>Q56989</accession>
<accession>Q0WK23</accession>
<keyword id="KW-0998">Cell outer membrane</keyword>
<keyword id="KW-0406">Ion transport</keyword>
<keyword id="KW-0408">Iron</keyword>
<keyword id="KW-0410">Iron transport</keyword>
<keyword id="KW-0472">Membrane</keyword>
<keyword id="KW-0675">Receptor</keyword>
<keyword id="KW-1185">Reference proteome</keyword>
<keyword id="KW-0732">Signal</keyword>
<keyword id="KW-0798">TonB box</keyword>
<keyword id="KW-0812">Transmembrane</keyword>
<keyword id="KW-1134">Transmembrane beta strand</keyword>
<keyword id="KW-0813">Transport</keyword>
<sequence length="676" mass="74230">MLRSTSDRFRWSSLSLAIACTLPLATQAADTTTTQTSSKKHSTDTMVVTATGNERSSFEAPMMVTVIEGNAPTSQTAATAADMLRQVPGLTVTGSGRTNGQDVVMRGYGKQGVLTLVDGVRQGTDTGHLNSTFLDPALVKRIEIVRGPAALLYGSGALGGVIAYETVDAADMLQPGQNSGYRVYSSAATGDHSFGLGASAFGRTDDLDGILSFGTRDIGNIRQSNGFNAPNDETISNVLAKGTWQIDSIQSLSANLRYYNNSAIEPKNPQTSAPSSTNVMTNRSTIQRDAQLRYNIKPLDQEWLNATAQVYYSEVEINARPQGSAEEGREQTTEGVKLENRTRLFIESPASHLLTYGTETYKQEQTPGGATESFPQAKIRFSSGWLQDEITLRDLPVSILAGTRYDNYSGSSDGYADVDADKWSSRGAISITPTDWLMLFGSYAQAFRAPTMGEMYNDSKHFAIPIRPGLTLTNYWVPNPNLKPETNETQEYGFGLRFSDLLMAEDDLQFKVSYFDTKAKDYISTRVDMQAMTTTSVNIDQAKIWGWDASMSYKTALFNWDLAYNRTRGKNQNTDEWLDTINPDTVTSIVDVPVANSGFSVGWIGTFANRSSRVSSSTPQAGYGVNDFYVSYKGQEAFKGMTTTMLLGNVFEKEYYTPQGIPQDGRNVKFFVSYQW</sequence>
<comment type="function">
    <text>This protein is involved in the initial step of iron uptake by binding hemin, an iron chelatin siderophore that allows the bacteria to extract iron from the environment.</text>
</comment>
<comment type="subcellular location">
    <subcellularLocation>
        <location evidence="2">Cell outer membrane</location>
        <topology evidence="2">Multi-pass membrane protein</topology>
    </subcellularLocation>
</comment>
<comment type="similarity">
    <text evidence="3">Belongs to the TonB-dependent receptor family.</text>
</comment>
<gene>
    <name type="primary">hmuR</name>
    <name type="ordered locus">YPO0283</name>
    <name type="ordered locus">y0543</name>
    <name type="ordered locus">YP_0438</name>
</gene>
<proteinExistence type="inferred from homology"/>
<feature type="signal peptide" evidence="1">
    <location>
        <begin position="1"/>
        <end position="28"/>
    </location>
</feature>
<feature type="chain" id="PRO_0000034759" description="Hemin receptor">
    <location>
        <begin position="29"/>
        <end position="676"/>
    </location>
</feature>
<feature type="domain" description="TBDR plug" evidence="2">
    <location>
        <begin position="56"/>
        <end position="167"/>
    </location>
</feature>
<feature type="domain" description="TBDR beta-barrel" evidence="2">
    <location>
        <begin position="178"/>
        <end position="676"/>
    </location>
</feature>
<feature type="short sequence motif" description="TonB box">
    <location>
        <begin position="44"/>
        <end position="51"/>
    </location>
</feature>
<feature type="short sequence motif" description="TonB C-terminal box">
    <location>
        <begin position="659"/>
        <end position="676"/>
    </location>
</feature>
<organism>
    <name type="scientific">Yersinia pestis</name>
    <dbReference type="NCBI Taxonomy" id="632"/>
    <lineage>
        <taxon>Bacteria</taxon>
        <taxon>Pseudomonadati</taxon>
        <taxon>Pseudomonadota</taxon>
        <taxon>Gammaproteobacteria</taxon>
        <taxon>Enterobacterales</taxon>
        <taxon>Yersiniaceae</taxon>
        <taxon>Yersinia</taxon>
    </lineage>
</organism>
<reference key="1">
    <citation type="journal article" date="1996" name="Mol. Microbiol.">
        <title>The hmu locus of Yersinia pestis is essential for utilization of free haemin and haem-protein complexes as iron sources.</title>
        <authorList>
            <person name="Hornung J.M."/>
            <person name="Jones H.A."/>
            <person name="Perry R.D."/>
        </authorList>
    </citation>
    <scope>NUCLEOTIDE SEQUENCE [GENOMIC DNA]</scope>
    <source>
        <strain>KIM6</strain>
    </source>
</reference>
<reference key="2">
    <citation type="journal article" date="2001" name="Nature">
        <title>Genome sequence of Yersinia pestis, the causative agent of plague.</title>
        <authorList>
            <person name="Parkhill J."/>
            <person name="Wren B.W."/>
            <person name="Thomson N.R."/>
            <person name="Titball R.W."/>
            <person name="Holden M.T.G."/>
            <person name="Prentice M.B."/>
            <person name="Sebaihia M."/>
            <person name="James K.D."/>
            <person name="Churcher C.M."/>
            <person name="Mungall K.L."/>
            <person name="Baker S."/>
            <person name="Basham D."/>
            <person name="Bentley S.D."/>
            <person name="Brooks K."/>
            <person name="Cerdeno-Tarraga A.-M."/>
            <person name="Chillingworth T."/>
            <person name="Cronin A."/>
            <person name="Davies R.M."/>
            <person name="Davis P."/>
            <person name="Dougan G."/>
            <person name="Feltwell T."/>
            <person name="Hamlin N."/>
            <person name="Holroyd S."/>
            <person name="Jagels K."/>
            <person name="Karlyshev A.V."/>
            <person name="Leather S."/>
            <person name="Moule S."/>
            <person name="Oyston P.C.F."/>
            <person name="Quail M.A."/>
            <person name="Rutherford K.M."/>
            <person name="Simmonds M."/>
            <person name="Skelton J."/>
            <person name="Stevens K."/>
            <person name="Whitehead S."/>
            <person name="Barrell B.G."/>
        </authorList>
    </citation>
    <scope>NUCLEOTIDE SEQUENCE [LARGE SCALE GENOMIC DNA]</scope>
    <source>
        <strain>CO-92 / Biovar Orientalis</strain>
    </source>
</reference>
<reference key="3">
    <citation type="journal article" date="2002" name="J. Bacteriol.">
        <title>Genome sequence of Yersinia pestis KIM.</title>
        <authorList>
            <person name="Deng W."/>
            <person name="Burland V."/>
            <person name="Plunkett G. III"/>
            <person name="Boutin A."/>
            <person name="Mayhew G.F."/>
            <person name="Liss P."/>
            <person name="Perna N.T."/>
            <person name="Rose D.J."/>
            <person name="Mau B."/>
            <person name="Zhou S."/>
            <person name="Schwartz D.C."/>
            <person name="Fetherston J.D."/>
            <person name="Lindler L.E."/>
            <person name="Brubaker R.R."/>
            <person name="Plano G.V."/>
            <person name="Straley S.C."/>
            <person name="McDonough K.A."/>
            <person name="Nilles M.L."/>
            <person name="Matson J.S."/>
            <person name="Blattner F.R."/>
            <person name="Perry R.D."/>
        </authorList>
    </citation>
    <scope>NUCLEOTIDE SEQUENCE [LARGE SCALE GENOMIC DNA]</scope>
    <source>
        <strain>KIM10+ / Biovar Mediaevalis</strain>
    </source>
</reference>
<reference key="4">
    <citation type="journal article" date="2004" name="DNA Res.">
        <title>Complete genome sequence of Yersinia pestis strain 91001, an isolate avirulent to humans.</title>
        <authorList>
            <person name="Song Y."/>
            <person name="Tong Z."/>
            <person name="Wang J."/>
            <person name="Wang L."/>
            <person name="Guo Z."/>
            <person name="Han Y."/>
            <person name="Zhang J."/>
            <person name="Pei D."/>
            <person name="Zhou D."/>
            <person name="Qin H."/>
            <person name="Pang X."/>
            <person name="Han Y."/>
            <person name="Zhai J."/>
            <person name="Li M."/>
            <person name="Cui B."/>
            <person name="Qi Z."/>
            <person name="Jin L."/>
            <person name="Dai R."/>
            <person name="Chen F."/>
            <person name="Li S."/>
            <person name="Ye C."/>
            <person name="Du Z."/>
            <person name="Lin W."/>
            <person name="Wang J."/>
            <person name="Yu J."/>
            <person name="Yang H."/>
            <person name="Wang J."/>
            <person name="Huang P."/>
            <person name="Yang R."/>
        </authorList>
    </citation>
    <scope>NUCLEOTIDE SEQUENCE [LARGE SCALE GENOMIC DNA]</scope>
    <source>
        <strain>91001 / Biovar Mediaevalis</strain>
    </source>
</reference>
<evidence type="ECO:0000255" key="1"/>
<evidence type="ECO:0000255" key="2">
    <source>
        <dbReference type="PROSITE-ProRule" id="PRU01360"/>
    </source>
</evidence>
<evidence type="ECO:0000305" key="3"/>